<gene>
    <name type="primary">Ankrd17</name>
    <name type="synonym">Foe</name>
    <name type="synonym">Gtar</name>
    <name type="synonym">Kiaa0697</name>
</gene>
<protein>
    <recommendedName>
        <fullName>Ankyrin repeat domain-containing protein 17</fullName>
    </recommendedName>
    <alternativeName>
        <fullName>Ankyrin repeat domain-containing protein FOE</fullName>
    </alternativeName>
    <alternativeName>
        <fullName>Gene trap ankyrin repeat protein</fullName>
    </alternativeName>
</protein>
<keyword id="KW-0007">Acetylation</keyword>
<keyword id="KW-0025">Alternative splicing</keyword>
<keyword id="KW-0040">ANK repeat</keyword>
<keyword id="KW-0175">Coiled coil</keyword>
<keyword id="KW-0963">Cytoplasm</keyword>
<keyword id="KW-0391">Immunity</keyword>
<keyword id="KW-0399">Innate immunity</keyword>
<keyword id="KW-1017">Isopeptide bond</keyword>
<keyword id="KW-0488">Methylation</keyword>
<keyword id="KW-0539">Nucleus</keyword>
<keyword id="KW-0597">Phosphoprotein</keyword>
<keyword id="KW-1185">Reference proteome</keyword>
<keyword id="KW-0677">Repeat</keyword>
<keyword id="KW-0694">RNA-binding</keyword>
<keyword id="KW-0832">Ubl conjugation</keyword>
<feature type="chain" id="PRO_0000307918" description="Ankyrin repeat domain-containing protein 17">
    <location>
        <begin position="1"/>
        <end position="2603"/>
    </location>
</feature>
<feature type="repeat" description="ANK 1">
    <location>
        <begin position="229"/>
        <end position="258"/>
    </location>
</feature>
<feature type="repeat" description="ANK 2">
    <location>
        <begin position="262"/>
        <end position="291"/>
    </location>
</feature>
<feature type="repeat" description="ANK 3">
    <location>
        <begin position="296"/>
        <end position="325"/>
    </location>
</feature>
<feature type="repeat" description="ANK 4">
    <location>
        <begin position="329"/>
        <end position="358"/>
    </location>
</feature>
<feature type="repeat" description="ANK 5">
    <location>
        <begin position="362"/>
        <end position="391"/>
    </location>
</feature>
<feature type="repeat" description="ANK 6">
    <location>
        <begin position="396"/>
        <end position="425"/>
    </location>
</feature>
<feature type="repeat" description="ANK 7">
    <location>
        <begin position="429"/>
        <end position="458"/>
    </location>
</feature>
<feature type="repeat" description="ANK 8">
    <location>
        <begin position="462"/>
        <end position="491"/>
    </location>
</feature>
<feature type="repeat" description="ANK 9">
    <location>
        <begin position="495"/>
        <end position="524"/>
    </location>
</feature>
<feature type="repeat" description="ANK 10">
    <location>
        <begin position="529"/>
        <end position="558"/>
    </location>
</feature>
<feature type="repeat" description="ANK 11">
    <location>
        <begin position="559"/>
        <end position="588"/>
    </location>
</feature>
<feature type="repeat" description="ANK 12">
    <location>
        <begin position="592"/>
        <end position="621"/>
    </location>
</feature>
<feature type="repeat" description="ANK 13">
    <location>
        <begin position="625"/>
        <end position="654"/>
    </location>
</feature>
<feature type="repeat" description="ANK 14">
    <location>
        <begin position="659"/>
        <end position="688"/>
    </location>
</feature>
<feature type="repeat" description="ANK 15">
    <location>
        <begin position="692"/>
        <end position="721"/>
    </location>
</feature>
<feature type="repeat" description="ANK 16">
    <location>
        <begin position="1078"/>
        <end position="1107"/>
    </location>
</feature>
<feature type="repeat" description="ANK 17">
    <location>
        <begin position="1111"/>
        <end position="1140"/>
    </location>
</feature>
<feature type="repeat" description="ANK 18">
    <location>
        <begin position="1145"/>
        <end position="1174"/>
    </location>
</feature>
<feature type="repeat" description="ANK 19">
    <location>
        <begin position="1178"/>
        <end position="1207"/>
    </location>
</feature>
<feature type="repeat" description="ANK 20">
    <location>
        <begin position="1213"/>
        <end position="1242"/>
    </location>
</feature>
<feature type="repeat" description="ANK 21">
    <location>
        <begin position="1247"/>
        <end position="1276"/>
    </location>
</feature>
<feature type="repeat" description="ANK 22">
    <location>
        <begin position="1280"/>
        <end position="1309"/>
    </location>
</feature>
<feature type="repeat" description="ANK 23">
    <location>
        <begin position="1315"/>
        <end position="1344"/>
    </location>
</feature>
<feature type="repeat" description="ANK 24">
    <location>
        <begin position="1348"/>
        <end position="1377"/>
    </location>
</feature>
<feature type="repeat" description="ANK 25">
    <location>
        <begin position="1381"/>
        <end position="1410"/>
    </location>
</feature>
<feature type="domain" description="KH" evidence="3">
    <location>
        <begin position="1721"/>
        <end position="1785"/>
    </location>
</feature>
<feature type="region of interest" description="Disordered" evidence="4">
    <location>
        <begin position="1"/>
        <end position="127"/>
    </location>
</feature>
<feature type="region of interest" description="Disordered" evidence="4">
    <location>
        <begin position="770"/>
        <end position="792"/>
    </location>
</feature>
<feature type="region of interest" description="Disordered" evidence="4">
    <location>
        <begin position="1475"/>
        <end position="1496"/>
    </location>
</feature>
<feature type="region of interest" description="Disordered" evidence="4">
    <location>
        <begin position="1513"/>
        <end position="1713"/>
    </location>
</feature>
<feature type="region of interest" description="Disordered" evidence="4">
    <location>
        <begin position="1902"/>
        <end position="1991"/>
    </location>
</feature>
<feature type="region of interest" description="Disordered" evidence="4">
    <location>
        <begin position="2007"/>
        <end position="2195"/>
    </location>
</feature>
<feature type="region of interest" description="Disordered" evidence="4">
    <location>
        <begin position="2269"/>
        <end position="2327"/>
    </location>
</feature>
<feature type="region of interest" description="Disordered" evidence="4">
    <location>
        <begin position="2378"/>
        <end position="2447"/>
    </location>
</feature>
<feature type="coiled-coil region" evidence="2">
    <location>
        <begin position="1438"/>
        <end position="1522"/>
    </location>
</feature>
<feature type="compositionally biased region" description="Low complexity" evidence="4">
    <location>
        <begin position="1"/>
        <end position="32"/>
    </location>
</feature>
<feature type="compositionally biased region" description="Basic residues" evidence="4">
    <location>
        <begin position="68"/>
        <end position="77"/>
    </location>
</feature>
<feature type="compositionally biased region" description="Low complexity" evidence="4">
    <location>
        <begin position="82"/>
        <end position="92"/>
    </location>
</feature>
<feature type="compositionally biased region" description="Gly residues" evidence="4">
    <location>
        <begin position="93"/>
        <end position="107"/>
    </location>
</feature>
<feature type="compositionally biased region" description="Acidic residues" evidence="4">
    <location>
        <begin position="112"/>
        <end position="127"/>
    </location>
</feature>
<feature type="compositionally biased region" description="Polar residues" evidence="4">
    <location>
        <begin position="775"/>
        <end position="792"/>
    </location>
</feature>
<feature type="compositionally biased region" description="Basic residues" evidence="4">
    <location>
        <begin position="1477"/>
        <end position="1487"/>
    </location>
</feature>
<feature type="compositionally biased region" description="Low complexity" evidence="4">
    <location>
        <begin position="1526"/>
        <end position="1546"/>
    </location>
</feature>
<feature type="compositionally biased region" description="Low complexity" evidence="4">
    <location>
        <begin position="1598"/>
        <end position="1607"/>
    </location>
</feature>
<feature type="compositionally biased region" description="Low complexity" evidence="4">
    <location>
        <begin position="1616"/>
        <end position="1636"/>
    </location>
</feature>
<feature type="compositionally biased region" description="Polar residues" evidence="4">
    <location>
        <begin position="1638"/>
        <end position="1648"/>
    </location>
</feature>
<feature type="compositionally biased region" description="Polar residues" evidence="4">
    <location>
        <begin position="1671"/>
        <end position="1699"/>
    </location>
</feature>
<feature type="compositionally biased region" description="Low complexity" evidence="4">
    <location>
        <begin position="1946"/>
        <end position="1989"/>
    </location>
</feature>
<feature type="compositionally biased region" description="Low complexity" evidence="4">
    <location>
        <begin position="2007"/>
        <end position="2024"/>
    </location>
</feature>
<feature type="compositionally biased region" description="Low complexity" evidence="4">
    <location>
        <begin position="2068"/>
        <end position="2077"/>
    </location>
</feature>
<feature type="compositionally biased region" description="Low complexity" evidence="4">
    <location>
        <begin position="2087"/>
        <end position="2108"/>
    </location>
</feature>
<feature type="compositionally biased region" description="Low complexity" evidence="4">
    <location>
        <begin position="2175"/>
        <end position="2189"/>
    </location>
</feature>
<feature type="compositionally biased region" description="Polar residues" evidence="4">
    <location>
        <begin position="2269"/>
        <end position="2298"/>
    </location>
</feature>
<feature type="compositionally biased region" description="Pro residues" evidence="4">
    <location>
        <begin position="2303"/>
        <end position="2313"/>
    </location>
</feature>
<feature type="compositionally biased region" description="Polar residues" evidence="4">
    <location>
        <begin position="2379"/>
        <end position="2391"/>
    </location>
</feature>
<feature type="compositionally biased region" description="Low complexity" evidence="4">
    <location>
        <begin position="2392"/>
        <end position="2411"/>
    </location>
</feature>
<feature type="compositionally biased region" description="Polar residues" evidence="4">
    <location>
        <begin position="2435"/>
        <end position="2447"/>
    </location>
</feature>
<feature type="modified residue" description="N-acetylmethionine" evidence="1">
    <location>
        <position position="1"/>
    </location>
</feature>
<feature type="modified residue" description="Phosphoserine" evidence="12">
    <location>
        <position position="15"/>
    </location>
</feature>
<feature type="modified residue" description="Phosphoserine" evidence="12">
    <location>
        <position position="42"/>
    </location>
</feature>
<feature type="modified residue" description="Phosphoserine" evidence="1">
    <location>
        <position position="152"/>
    </location>
</feature>
<feature type="modified residue" description="Phosphoserine" evidence="1">
    <location>
        <position position="799"/>
    </location>
</feature>
<feature type="modified residue" description="Phosphoserine" evidence="1">
    <location>
        <position position="1453"/>
    </location>
</feature>
<feature type="modified residue" description="Phosphoserine" evidence="1">
    <location>
        <position position="1631"/>
    </location>
</feature>
<feature type="modified residue" description="Phosphoserine" evidence="12">
    <location>
        <position position="1692"/>
    </location>
</feature>
<feature type="modified residue" description="Phosphoserine" evidence="12">
    <location>
        <position position="1696"/>
    </location>
</feature>
<feature type="modified residue" description="Phosphoserine" evidence="12">
    <location>
        <position position="1705"/>
    </location>
</feature>
<feature type="modified residue" description="Asymmetric dimethylarginine" evidence="13">
    <location>
        <position position="1870"/>
    </location>
</feature>
<feature type="modified residue" description="Phosphoserine" evidence="1">
    <location>
        <position position="2038"/>
    </location>
</feature>
<feature type="modified residue" description="Phosphoserine" evidence="12">
    <location>
        <position position="2040"/>
    </location>
</feature>
<feature type="modified residue" description="Phosphoserine" evidence="12">
    <location>
        <position position="2041"/>
    </location>
</feature>
<feature type="modified residue" description="Phosphoserine" evidence="11 12">
    <location>
        <position position="2043"/>
    </location>
</feature>
<feature type="modified residue" description="Phosphoserine" evidence="12">
    <location>
        <position position="2055"/>
    </location>
</feature>
<feature type="modified residue" description="Phosphoserine" evidence="1">
    <location>
        <position position="2063"/>
    </location>
</feature>
<feature type="modified residue" description="Phosphoserine" evidence="1">
    <location>
        <position position="2373"/>
    </location>
</feature>
<feature type="modified residue" description="Phosphoserine" evidence="12">
    <location>
        <position position="2401"/>
    </location>
</feature>
<feature type="cross-link" description="Glycyl lysine isopeptide (Lys-Gly) (interchain with G-Cter in SUMO2)" evidence="1">
    <location>
        <position position="314"/>
    </location>
</feature>
<feature type="splice variant" id="VSP_028866" description="In isoform 2." evidence="9">
    <location>
        <begin position="1"/>
        <end position="141"/>
    </location>
</feature>
<feature type="splice variant" id="VSP_028867" description="In isoform 2." evidence="9">
    <location>
        <begin position="774"/>
        <end position="1024"/>
    </location>
</feature>
<feature type="splice variant" id="VSP_028868" description="In isoform 3." evidence="8">
    <location>
        <position position="1024"/>
    </location>
</feature>
<feature type="splice variant" id="VSP_028869" description="In isoform 3." evidence="8">
    <original>GESK</original>
    <variation>VSFL</variation>
    <location>
        <begin position="1597"/>
        <end position="1600"/>
    </location>
</feature>
<feature type="splice variant" id="VSP_028870" description="In isoform 3." evidence="8">
    <location>
        <begin position="1601"/>
        <end position="2603"/>
    </location>
</feature>
<feature type="splice variant" id="VSP_028871" description="In isoform 2." evidence="9">
    <location>
        <begin position="1723"/>
        <end position="2603"/>
    </location>
</feature>
<feature type="sequence conflict" description="In Ref. 3; AAK07672." evidence="10" ref="3">
    <original>K</original>
    <variation>E</variation>
    <location>
        <position position="347"/>
    </location>
</feature>
<feature type="sequence conflict" description="In Ref. 3; AAK07672." evidence="10" ref="3">
    <original>E</original>
    <variation>G</variation>
    <location>
        <position position="357"/>
    </location>
</feature>
<feature type="sequence conflict" description="In Ref. 3; AAK07672." evidence="10" ref="3">
    <original>F</original>
    <variation>L</variation>
    <location>
        <position position="908"/>
    </location>
</feature>
<proteinExistence type="evidence at protein level"/>
<comment type="function">
    <text evidence="1 7">Could play pivotal roles in cell cycle and DNA regulation. Involved in innate immune defense against viruse by positively regulating the viral dsRNA receptors RIGI and IFIH1 signaling pathways. Involves in NOD2- and NOD1-mediated responses to bacteria suggesting a role in innate antibacterial immune pathways too. Could play a central role for the formation and/or maintenance of the blood vessels of the circulation system (PubMed:19619540).</text>
</comment>
<comment type="subunit">
    <text evidence="1">Interacts (via N-terminus) with NOD2. Interacts with CDK2, MCM3, MCM5, MCM7, CDC6 and PCNA. Interacts with MAVS and IFIH1. Interacts (via the second ankyrin repeat cluster) with RIGI.</text>
</comment>
<comment type="subcellular location">
    <subcellularLocation>
        <location evidence="1">Cytoplasm</location>
    </subcellularLocation>
    <subcellularLocation>
        <location evidence="1">Nucleus</location>
    </subcellularLocation>
    <text evidence="1">Detected around the nucleolus.</text>
</comment>
<comment type="alternative products">
    <event type="alternative splicing"/>
    <isoform>
        <id>Q99NH0-1</id>
        <name>1</name>
        <sequence type="displayed"/>
    </isoform>
    <isoform>
        <id>Q99NH0-2</id>
        <name>2</name>
        <sequence type="described" ref="VSP_028866 VSP_028867 VSP_028871"/>
    </isoform>
    <isoform>
        <id>Q99NH0-3</id>
        <name>3</name>
        <sequence type="described" ref="VSP_028868 VSP_028869 VSP_028870"/>
    </isoform>
    <text evidence="5">The N-terminus of another isoform lacking the first 141 amino acids is described in.</text>
</comment>
<comment type="tissue specificity">
    <text evidence="5 6 7">Highly expressed in fetal liver. Detected in adult liver cells, ovarian oocytes, seminiferous tubules of the testes and pelvic region of the kidney. It was not detected in heart, gut, lung, spleen and skeletal muscle. Earliest specific in situ marker of hepatic differentiation during embryogenesis, useful for characterization of inductive events involved in hepatic specification.</text>
</comment>
<comment type="developmental stage">
    <text evidence="5">Expressed at 8.0-8.5 dpc in the foregut endoderm and at 9.5 dpc in cells migrating into the septum transversum. At 10.5 dpc, highly expressed exclusively in the fetal liver. From 10.5 dpc, expressed in the developing liver throughout gestation and in neonates. At 17.5 dpc, detected in the dorsal root ganglia of the peripheral nervous system.</text>
</comment>
<comment type="PTM">
    <text evidence="1">Phosphorylated by CDK2.</text>
</comment>
<comment type="disruption phenotype">
    <text evidence="7">Deficient mice display embryonic lethality during organogenesis with hemorrhages, impaired vascular smooth muscle cell development, impaired vascular integrity and growth retardation.</text>
</comment>
<comment type="sequence caution" evidence="10">
    <conflict type="erroneous initiation">
        <sequence resource="EMBL-CDS" id="AAH39213"/>
    </conflict>
</comment>
<comment type="sequence caution" evidence="10">
    <conflict type="miscellaneous discrepancy">
        <sequence resource="EMBL-CDS" id="BAC98003"/>
    </conflict>
    <text>The sequence differs from that shown because it seems to be derived from a pre-mRNA.</text>
</comment>
<name>ANR17_MOUSE</name>
<organism>
    <name type="scientific">Mus musculus</name>
    <name type="common">Mouse</name>
    <dbReference type="NCBI Taxonomy" id="10090"/>
    <lineage>
        <taxon>Eukaryota</taxon>
        <taxon>Metazoa</taxon>
        <taxon>Chordata</taxon>
        <taxon>Craniata</taxon>
        <taxon>Vertebrata</taxon>
        <taxon>Euteleostomi</taxon>
        <taxon>Mammalia</taxon>
        <taxon>Eutheria</taxon>
        <taxon>Euarchontoglires</taxon>
        <taxon>Glires</taxon>
        <taxon>Rodentia</taxon>
        <taxon>Myomorpha</taxon>
        <taxon>Muroidea</taxon>
        <taxon>Muridae</taxon>
        <taxon>Murinae</taxon>
        <taxon>Mus</taxon>
        <taxon>Mus</taxon>
    </lineage>
</organism>
<sequence>MEKATVPAAAEGEGSPPAAAAVAAPPAAAAAEVGGGARPASSPRGMVRVCDLLLKKKPPQQQQQQQPPHHKAKRNRTCRPPSSSESSSDSDNSGGGGGGGGGGGGGTSSNNSEEEEDDDDEEEEVSEVESFILDQDDLENPMLETASKLLLSGTADGADLRTVDPETQARLEALLEAAGIGKLSTADGKAFADPEVLRRLTSSVSCALDEAAAALTRMRAESTANAGQSDNRSLAEACSEGDVNAVRKLLIEGRSVNEHTEEGESLLCLACSAGYYELAQVLLAMHANVEDRGIKGDITPLMAAANGGHVKIVKLLLAHKADVNAQSSTGNTALTYACAGGYVDVVKVLLESGASIEDHNENGHTPLMEAGSAGHVEVARLLLENGAGINTHSNEFKESALTLACYKGHLEMVRFLLEAGADQEHKTDEMHTALMEACMDGHVEVARLLLDSGAQVNMPADSFESPLTLAACGGHVELAALLIERGASLEEVNDEGYTPLMEAAREGHEEMVALLLGQGANINAQTEETQETALTLACCGGFLEVADFLIKAGADIELGCSTPLMEAAQEGHLELVKYLLAAGANVHATTATGDTALTYACENGHTDVADVLLQAGADLEHESEGGRTPLMKAARAGHVCTVQFLISKGANVNRTTANNDHTVLSLACAGGHLAVVELLLAHGADPTHRLKDGSTMLIEAAKGGHTSVVCYLLDYPNNLLAAPPPDVTQLTPPSHDLNRAPRVPVQALPMVVPPQEPDKPPANLAATLPVRSKAASKQKSNSHLPANSQDVQGYITNQSPESIVEEAQGKLTELEQRIKEAIEKNAQLQSLELAHADQLTKEKIEELNKTREEQIQKKQKILEELQKVERELQLKTQQQLKKQYLEVKAQRIQLQQQQQQSCQHLGLFTSVGVGEQLSEGDYARLQQVDPVLLKDEPQQTAAQMGFAPIQPLAMPQALPLATGPLPPGSIANLTELQGVIVGQPVLGQAQLAGLGQGILTETQQGLMVASPAQTLNDTLDDIMAAVSGRASAMSNTPTHSIAASVSQPQTPTPSPIISPSAMLPIYPAIDIDAQTESNHDTALTLACAGGHEELVQTLLERGASIEHRDKKGFTPLILAATAGHVGVVEILLDNGADIEAQSERTKDTPLSLACSGGRQEVVELLLARGANKEHRNVSDYTPLSLAASGGYVNIIKILLNAGAEINSRTGSKLGISPLMLAAMNGHTAAVKLLLDMGSDINAQIETNRNTALTLACFQGRTEVVSLLLDRKANVEHRAKTGLTPLMEAASGGYAEVGRVLLDKGADVNAPPVPSSRDTALTIAADKGHYKFCELLIGKGAHIDVRNKKGNTPLWLAANGGHLDVVQLLVQATADVDAADNRKITPLMAAFRKGHVKVVRYLVKEVNQFPSDSECMRYIATITDKEMLKKCHLCMESIVQAKDRQAAEANKNASILLEELDLEKLREESRRLALAAKREKRKEKRRKKKEEQRRKLEEIEAKNKENFELQAAQEKEKLKVEEEPEVLTEPPSATTTTTIGISATWTTLAGSHGKRNNTITTTSSKRKNRKNKITPENVQIIFDDPLPISYSQPEKVNGESKSSSTSESGDSDNMRISSCSDESSNSNSSRKSNNHASAVVTTTMASKKQPSVLVTFPKEERKSVSGKASIKLSETVNEGTSNSLSTCTKSGPSPLSSPNGKLTVASPKRGPKREEGWKEVVRRSKKVSVPSTVISRVIGRGGCNINAIRECTGAHIDIDKQKDKTGDRIITIRGGTESTRQATQLINALIKDPDKEIDELIPKNRLKSSTANSKIGSSAPTTTAANSSLMGIKMTTVALSSTSQTATALTVPAISSASTHKTIKNPVNNVRPGFPVSLPLAYPPPQFAHALLAAQTFQQIRPPRLPMTHFGGTFPPAQSTWGPFPVRPLSPARATNSPKPHMVPRHSNQNSSGSQVNSAGSLTSSPTTTASSSASAVPGTTSNGSPSSPSVRRQLFVTVVKTSNATTTTVTTTASNNSTAPTNATYPMPTAKEHYPVSSPSSPSPPAQPGGVSRNSPLDCGSASPNKGASASEQEASSPPVVEPANSRPPHSSSSSGSSSGHSTQQQPPGSVPQEPRPPLQQSQVPSPDVRMTVPPTATSSAPVAVPSTAPVTYPMPQTQMGCSQPPKMEAPAIRPPSHATAAPHKTPAPVQSSSASVLNVNHIKRPHSVPSSVQLPSTLSTQSACQNSVHPANKPVAPNFSAPLPFGPFSTLFENNPTNAHAFWGGPVVSSQSTPESMLSGKSSYLPNSDPLHQSDTSKAPGFRPPLQRPAPSPSGIVNMDTPYGSVTPSSTHLGNFASSLSGGQMYGPGAPLGGAPLGGAPTAANFNRQHFSPLSLLTPCSSASNESPAQSVSSGVRAPSPAPSSVPLGSEKPSSVSQDRKVPVPIGTERSARIRQTGTSAPSVIGSNLSTSVGHSGIWSFEGIGGNQDKVDWCNPGMGNPMIHRPMSDPGVFSQHQAMERDSTGIVTPSGTFHQHVPAGYMDFPKVGSMPFSVYGNAMLPPVAPIADGAGGPIFNGPHSAEPSWNSLIKMVSSSTENNGPQTVWTGPWAPHMNSVHMNQLG</sequence>
<dbReference type="EMBL" id="AF130371">
    <property type="protein sequence ID" value="AAQ13559.1"/>
    <property type="molecule type" value="mRNA"/>
</dbReference>
<dbReference type="EMBL" id="AC117578">
    <property type="status" value="NOT_ANNOTATED_CDS"/>
    <property type="molecule type" value="Genomic_DNA"/>
</dbReference>
<dbReference type="EMBL" id="AC162171">
    <property type="status" value="NOT_ANNOTATED_CDS"/>
    <property type="molecule type" value="Genomic_DNA"/>
</dbReference>
<dbReference type="EMBL" id="AY026253">
    <property type="protein sequence ID" value="AAK07672.1"/>
    <property type="molecule type" value="mRNA"/>
</dbReference>
<dbReference type="EMBL" id="AK160263">
    <property type="protein sequence ID" value="BAE35720.1"/>
    <property type="molecule type" value="mRNA"/>
</dbReference>
<dbReference type="EMBL" id="AK129193">
    <property type="protein sequence ID" value="BAC98003.1"/>
    <property type="status" value="ALT_SEQ"/>
    <property type="molecule type" value="Transcribed_RNA"/>
</dbReference>
<dbReference type="EMBL" id="BC039213">
    <property type="protein sequence ID" value="AAH39213.1"/>
    <property type="status" value="ALT_INIT"/>
    <property type="molecule type" value="mRNA"/>
</dbReference>
<dbReference type="EMBL" id="BC057195">
    <property type="protein sequence ID" value="AAH57195.1"/>
    <property type="molecule type" value="mRNA"/>
</dbReference>
<dbReference type="CCDS" id="CCDS57354.1">
    <molecule id="Q99NH0-1"/>
</dbReference>
<dbReference type="RefSeq" id="NP_112148.2">
    <molecule id="Q99NH0-1"/>
    <property type="nucleotide sequence ID" value="NM_030886.2"/>
</dbReference>
<dbReference type="SMR" id="Q99NH0"/>
<dbReference type="BioGRID" id="219887">
    <property type="interactions" value="13"/>
</dbReference>
<dbReference type="FunCoup" id="Q99NH0">
    <property type="interactions" value="5060"/>
</dbReference>
<dbReference type="IntAct" id="Q99NH0">
    <property type="interactions" value="5"/>
</dbReference>
<dbReference type="MINT" id="Q99NH0"/>
<dbReference type="STRING" id="10090.ENSMUSP00000014421"/>
<dbReference type="GlyGen" id="Q99NH0">
    <property type="glycosylation" value="42 sites, 4 N-linked glycans (4 sites), 1 O-linked glycan (35 sites)"/>
</dbReference>
<dbReference type="iPTMnet" id="Q99NH0"/>
<dbReference type="PhosphoSitePlus" id="Q99NH0"/>
<dbReference type="SwissPalm" id="Q99NH0"/>
<dbReference type="jPOST" id="Q99NH0"/>
<dbReference type="PaxDb" id="10090-ENSMUSP00000014421"/>
<dbReference type="PeptideAtlas" id="Q99NH0"/>
<dbReference type="ProteomicsDB" id="281872">
    <molecule id="Q99NH0-1"/>
</dbReference>
<dbReference type="ProteomicsDB" id="281873">
    <molecule id="Q99NH0-2"/>
</dbReference>
<dbReference type="ProteomicsDB" id="281874">
    <molecule id="Q99NH0-3"/>
</dbReference>
<dbReference type="Pumba" id="Q99NH0"/>
<dbReference type="Antibodypedia" id="24452">
    <property type="antibodies" value="148 antibodies from 17 providers"/>
</dbReference>
<dbReference type="DNASU" id="81702"/>
<dbReference type="Ensembl" id="ENSMUST00000014421.15">
    <molecule id="Q99NH0-1"/>
    <property type="protein sequence ID" value="ENSMUSP00000014421.9"/>
    <property type="gene ID" value="ENSMUSG00000055204.17"/>
</dbReference>
<dbReference type="GeneID" id="81702"/>
<dbReference type="KEGG" id="mmu:81702"/>
<dbReference type="UCSC" id="uc008yav.1">
    <molecule id="Q99NH0-2"/>
    <property type="organism name" value="mouse"/>
</dbReference>
<dbReference type="UCSC" id="uc008yay.1">
    <molecule id="Q99NH0-3"/>
    <property type="organism name" value="mouse"/>
</dbReference>
<dbReference type="UCSC" id="uc029vje.1">
    <molecule id="Q99NH0-1"/>
    <property type="organism name" value="mouse"/>
</dbReference>
<dbReference type="AGR" id="MGI:1932101"/>
<dbReference type="CTD" id="26057"/>
<dbReference type="MGI" id="MGI:1932101">
    <property type="gene designation" value="Ankrd17"/>
</dbReference>
<dbReference type="VEuPathDB" id="HostDB:ENSMUSG00000055204"/>
<dbReference type="eggNOG" id="KOG0504">
    <property type="taxonomic scope" value="Eukaryota"/>
</dbReference>
<dbReference type="eggNOG" id="KOG4369">
    <property type="taxonomic scope" value="Eukaryota"/>
</dbReference>
<dbReference type="GeneTree" id="ENSGT00940000153768"/>
<dbReference type="InParanoid" id="Q99NH0"/>
<dbReference type="OMA" id="NDNGHCA"/>
<dbReference type="OrthoDB" id="10071877at2759"/>
<dbReference type="PhylomeDB" id="Q99NH0"/>
<dbReference type="TreeFam" id="TF328552"/>
<dbReference type="BioGRID-ORCS" id="81702">
    <property type="hits" value="15 hits in 78 CRISPR screens"/>
</dbReference>
<dbReference type="ChiTaRS" id="Ankrd17">
    <property type="organism name" value="mouse"/>
</dbReference>
<dbReference type="PRO" id="PR:Q99NH0"/>
<dbReference type="Proteomes" id="UP000000589">
    <property type="component" value="Chromosome 5"/>
</dbReference>
<dbReference type="RNAct" id="Q99NH0">
    <property type="molecule type" value="protein"/>
</dbReference>
<dbReference type="Bgee" id="ENSMUSG00000055204">
    <property type="expression patterns" value="Expressed in animal zygote and 265 other cell types or tissues"/>
</dbReference>
<dbReference type="ExpressionAtlas" id="Q99NH0">
    <property type="expression patterns" value="baseline and differential"/>
</dbReference>
<dbReference type="GO" id="GO:0000785">
    <property type="term" value="C:chromatin"/>
    <property type="evidence" value="ECO:0000250"/>
    <property type="project" value="UniProtKB"/>
</dbReference>
<dbReference type="GO" id="GO:0005737">
    <property type="term" value="C:cytoplasm"/>
    <property type="evidence" value="ECO:0000250"/>
    <property type="project" value="UniProtKB"/>
</dbReference>
<dbReference type="GO" id="GO:0001673">
    <property type="term" value="C:male germ cell nucleus"/>
    <property type="evidence" value="ECO:0000314"/>
    <property type="project" value="MGI"/>
</dbReference>
<dbReference type="GO" id="GO:0003682">
    <property type="term" value="F:chromatin binding"/>
    <property type="evidence" value="ECO:0000250"/>
    <property type="project" value="UniProtKB"/>
</dbReference>
<dbReference type="GO" id="GO:0003723">
    <property type="term" value="F:RNA binding"/>
    <property type="evidence" value="ECO:0007669"/>
    <property type="project" value="UniProtKB-KW"/>
</dbReference>
<dbReference type="GO" id="GO:0001955">
    <property type="term" value="P:blood vessel maturation"/>
    <property type="evidence" value="ECO:0000315"/>
    <property type="project" value="MGI"/>
</dbReference>
<dbReference type="GO" id="GO:0042742">
    <property type="term" value="P:defense response to bacterium"/>
    <property type="evidence" value="ECO:0000250"/>
    <property type="project" value="UniProtKB"/>
</dbReference>
<dbReference type="GO" id="GO:0007492">
    <property type="term" value="P:endoderm development"/>
    <property type="evidence" value="ECO:0000304"/>
    <property type="project" value="MGI"/>
</dbReference>
<dbReference type="GO" id="GO:0045087">
    <property type="term" value="P:innate immune response"/>
    <property type="evidence" value="ECO:0007669"/>
    <property type="project" value="UniProtKB-KW"/>
</dbReference>
<dbReference type="GO" id="GO:0051151">
    <property type="term" value="P:negative regulation of smooth muscle cell differentiation"/>
    <property type="evidence" value="ECO:0000315"/>
    <property type="project" value="MGI"/>
</dbReference>
<dbReference type="GO" id="GO:0043123">
    <property type="term" value="P:positive regulation of canonical NF-kappaB signal transduction"/>
    <property type="evidence" value="ECO:0000250"/>
    <property type="project" value="UniProtKB"/>
</dbReference>
<dbReference type="GO" id="GO:0045787">
    <property type="term" value="P:positive regulation of cell cycle"/>
    <property type="evidence" value="ECO:0000250"/>
    <property type="project" value="UniProtKB"/>
</dbReference>
<dbReference type="GO" id="GO:1900087">
    <property type="term" value="P:positive regulation of G1/S transition of mitotic cell cycle"/>
    <property type="evidence" value="ECO:0000250"/>
    <property type="project" value="UniProtKB"/>
</dbReference>
<dbReference type="GO" id="GO:1900245">
    <property type="term" value="P:positive regulation of MDA-5 signaling pathway"/>
    <property type="evidence" value="ECO:0000250"/>
    <property type="project" value="UniProtKB"/>
</dbReference>
<dbReference type="GO" id="GO:1900246">
    <property type="term" value="P:positive regulation of RIG-I signaling pathway"/>
    <property type="evidence" value="ECO:0000250"/>
    <property type="project" value="UniProtKB"/>
</dbReference>
<dbReference type="GO" id="GO:0006275">
    <property type="term" value="P:regulation of DNA replication"/>
    <property type="evidence" value="ECO:0000250"/>
    <property type="project" value="UniProtKB"/>
</dbReference>
<dbReference type="CDD" id="cd22502">
    <property type="entry name" value="KH-I_ANKRD17"/>
    <property type="match status" value="1"/>
</dbReference>
<dbReference type="CDD" id="cd22249">
    <property type="entry name" value="UDM1_RNF168_RNF169-like"/>
    <property type="match status" value="1"/>
</dbReference>
<dbReference type="FunFam" id="1.25.40.20:FF:000046">
    <property type="entry name" value="Ankyrin repeat and KH domain-containing protein 1"/>
    <property type="match status" value="1"/>
</dbReference>
<dbReference type="FunFam" id="1.25.40.20:FF:000114">
    <property type="entry name" value="ankyrin repeat and KH domain-containing protein 1 isoform X2"/>
    <property type="match status" value="1"/>
</dbReference>
<dbReference type="FunFam" id="1.25.40.20:FF:000062">
    <property type="entry name" value="ankyrin repeat domain-containing protein 17"/>
    <property type="match status" value="1"/>
</dbReference>
<dbReference type="FunFam" id="1.25.40.20:FF:000012">
    <property type="entry name" value="ankyrin repeat domain-containing protein 17 isoform X1"/>
    <property type="match status" value="1"/>
</dbReference>
<dbReference type="FunFam" id="3.30.1370.10:FF:000031">
    <property type="entry name" value="ankyrin repeat domain-containing protein 17 isoform X1"/>
    <property type="match status" value="1"/>
</dbReference>
<dbReference type="FunFam" id="1.25.40.20:FF:000014">
    <property type="entry name" value="ankyrin repeat domain-containing protein 17 isoform X2"/>
    <property type="match status" value="1"/>
</dbReference>
<dbReference type="FunFam" id="1.25.40.20:FF:000055">
    <property type="entry name" value="ankyrin repeat domain-containing protein 17 isoform X2"/>
    <property type="match status" value="1"/>
</dbReference>
<dbReference type="FunFam" id="1.25.40.20:FF:000161">
    <property type="entry name" value="ankyrin repeat domain-containing protein 17 isoform X3"/>
    <property type="match status" value="1"/>
</dbReference>
<dbReference type="Gene3D" id="1.25.40.20">
    <property type="entry name" value="Ankyrin repeat-containing domain"/>
    <property type="match status" value="7"/>
</dbReference>
<dbReference type="Gene3D" id="3.30.1370.10">
    <property type="entry name" value="K Homology domain, type 1"/>
    <property type="match status" value="1"/>
</dbReference>
<dbReference type="InterPro" id="IPR051631">
    <property type="entry name" value="Ankyrin-KH/SAM_domain"/>
</dbReference>
<dbReference type="InterPro" id="IPR002110">
    <property type="entry name" value="Ankyrin_rpt"/>
</dbReference>
<dbReference type="InterPro" id="IPR036770">
    <property type="entry name" value="Ankyrin_rpt-contain_sf"/>
</dbReference>
<dbReference type="InterPro" id="IPR047375">
    <property type="entry name" value="KH-I_ANKRD17"/>
</dbReference>
<dbReference type="InterPro" id="IPR004087">
    <property type="entry name" value="KH_dom"/>
</dbReference>
<dbReference type="InterPro" id="IPR004088">
    <property type="entry name" value="KH_dom_type_1"/>
</dbReference>
<dbReference type="InterPro" id="IPR036612">
    <property type="entry name" value="KH_dom_type_1_sf"/>
</dbReference>
<dbReference type="PANTHER" id="PTHR23206:SF1">
    <property type="entry name" value="ANKYRIN REPEAT DOMAIN-CONTAINING PROTEIN 17"/>
    <property type="match status" value="1"/>
</dbReference>
<dbReference type="PANTHER" id="PTHR23206">
    <property type="entry name" value="MASK PROTEIN"/>
    <property type="match status" value="1"/>
</dbReference>
<dbReference type="Pfam" id="PF00023">
    <property type="entry name" value="Ank"/>
    <property type="match status" value="3"/>
</dbReference>
<dbReference type="Pfam" id="PF12796">
    <property type="entry name" value="Ank_2"/>
    <property type="match status" value="8"/>
</dbReference>
<dbReference type="Pfam" id="PF00013">
    <property type="entry name" value="KH_1"/>
    <property type="match status" value="1"/>
</dbReference>
<dbReference type="PRINTS" id="PR01415">
    <property type="entry name" value="ANKYRIN"/>
</dbReference>
<dbReference type="SMART" id="SM00248">
    <property type="entry name" value="ANK"/>
    <property type="match status" value="25"/>
</dbReference>
<dbReference type="SMART" id="SM00322">
    <property type="entry name" value="KH"/>
    <property type="match status" value="1"/>
</dbReference>
<dbReference type="SUPFAM" id="SSF48403">
    <property type="entry name" value="Ankyrin repeat"/>
    <property type="match status" value="3"/>
</dbReference>
<dbReference type="SUPFAM" id="SSF54791">
    <property type="entry name" value="Eukaryotic type KH-domain (KH-domain type I)"/>
    <property type="match status" value="1"/>
</dbReference>
<dbReference type="PROSITE" id="PS50297">
    <property type="entry name" value="ANK_REP_REGION"/>
    <property type="match status" value="1"/>
</dbReference>
<dbReference type="PROSITE" id="PS50088">
    <property type="entry name" value="ANK_REPEAT"/>
    <property type="match status" value="20"/>
</dbReference>
<dbReference type="PROSITE" id="PS50084">
    <property type="entry name" value="KH_TYPE_1"/>
    <property type="match status" value="1"/>
</dbReference>
<reference key="1">
    <citation type="submission" date="1999-02" db="EMBL/GenBank/DDBJ databases">
        <title>A novel ankyrin repeat domain-containing protein.</title>
        <authorList>
            <person name="Chen X."/>
            <person name="Shen J.C.-K."/>
        </authorList>
    </citation>
    <scope>NUCLEOTIDE SEQUENCE [MRNA] (ISOFORM 2)</scope>
</reference>
<reference key="2">
    <citation type="journal article" date="2009" name="PLoS Biol.">
        <title>Lineage-specific biology revealed by a finished genome assembly of the mouse.</title>
        <authorList>
            <person name="Church D.M."/>
            <person name="Goodstadt L."/>
            <person name="Hillier L.W."/>
            <person name="Zody M.C."/>
            <person name="Goldstein S."/>
            <person name="She X."/>
            <person name="Bult C.J."/>
            <person name="Agarwala R."/>
            <person name="Cherry J.L."/>
            <person name="DiCuccio M."/>
            <person name="Hlavina W."/>
            <person name="Kapustin Y."/>
            <person name="Meric P."/>
            <person name="Maglott D."/>
            <person name="Birtle Z."/>
            <person name="Marques A.C."/>
            <person name="Graves T."/>
            <person name="Zhou S."/>
            <person name="Teague B."/>
            <person name="Potamousis K."/>
            <person name="Churas C."/>
            <person name="Place M."/>
            <person name="Herschleb J."/>
            <person name="Runnheim R."/>
            <person name="Forrest D."/>
            <person name="Amos-Landgraf J."/>
            <person name="Schwartz D.C."/>
            <person name="Cheng Z."/>
            <person name="Lindblad-Toh K."/>
            <person name="Eichler E.E."/>
            <person name="Ponting C.P."/>
        </authorList>
    </citation>
    <scope>NUCLEOTIDE SEQUENCE [LARGE SCALE GENOMIC DNA]</scope>
    <source>
        <strain>C57BL/6J</strain>
    </source>
</reference>
<reference key="3">
    <citation type="journal article" date="2001" name="Mech. Dev.">
        <title>A gene trap integration provides an early in situ marker for hepatic specification of the foregut endoderm.</title>
        <authorList>
            <person name="Watt A.J."/>
            <person name="Jones E.A."/>
            <person name="Ure J.M."/>
            <person name="Peddie D."/>
            <person name="Wilson D.I."/>
            <person name="Forrester L.M."/>
        </authorList>
    </citation>
    <scope>NUCLEOTIDE SEQUENCE [MRNA] (ISOFORM 3)</scope>
    <scope>ALTERNATIVE SPLICING</scope>
    <scope>DEVELOPMENTAL STAGE</scope>
    <scope>TISSUE SPECIFICITY</scope>
    <source>
        <strain>129/Sv</strain>
    </source>
</reference>
<reference key="4">
    <citation type="journal article" date="2005" name="Science">
        <title>The transcriptional landscape of the mammalian genome.</title>
        <authorList>
            <person name="Carninci P."/>
            <person name="Kasukawa T."/>
            <person name="Katayama S."/>
            <person name="Gough J."/>
            <person name="Frith M.C."/>
            <person name="Maeda N."/>
            <person name="Oyama R."/>
            <person name="Ravasi T."/>
            <person name="Lenhard B."/>
            <person name="Wells C."/>
            <person name="Kodzius R."/>
            <person name="Shimokawa K."/>
            <person name="Bajic V.B."/>
            <person name="Brenner S.E."/>
            <person name="Batalov S."/>
            <person name="Forrest A.R."/>
            <person name="Zavolan M."/>
            <person name="Davis M.J."/>
            <person name="Wilming L.G."/>
            <person name="Aidinis V."/>
            <person name="Allen J.E."/>
            <person name="Ambesi-Impiombato A."/>
            <person name="Apweiler R."/>
            <person name="Aturaliya R.N."/>
            <person name="Bailey T.L."/>
            <person name="Bansal M."/>
            <person name="Baxter L."/>
            <person name="Beisel K.W."/>
            <person name="Bersano T."/>
            <person name="Bono H."/>
            <person name="Chalk A.M."/>
            <person name="Chiu K.P."/>
            <person name="Choudhary V."/>
            <person name="Christoffels A."/>
            <person name="Clutterbuck D.R."/>
            <person name="Crowe M.L."/>
            <person name="Dalla E."/>
            <person name="Dalrymple B.P."/>
            <person name="de Bono B."/>
            <person name="Della Gatta G."/>
            <person name="di Bernardo D."/>
            <person name="Down T."/>
            <person name="Engstrom P."/>
            <person name="Fagiolini M."/>
            <person name="Faulkner G."/>
            <person name="Fletcher C.F."/>
            <person name="Fukushima T."/>
            <person name="Furuno M."/>
            <person name="Futaki S."/>
            <person name="Gariboldi M."/>
            <person name="Georgii-Hemming P."/>
            <person name="Gingeras T.R."/>
            <person name="Gojobori T."/>
            <person name="Green R.E."/>
            <person name="Gustincich S."/>
            <person name="Harbers M."/>
            <person name="Hayashi Y."/>
            <person name="Hensch T.K."/>
            <person name="Hirokawa N."/>
            <person name="Hill D."/>
            <person name="Huminiecki L."/>
            <person name="Iacono M."/>
            <person name="Ikeo K."/>
            <person name="Iwama A."/>
            <person name="Ishikawa T."/>
            <person name="Jakt M."/>
            <person name="Kanapin A."/>
            <person name="Katoh M."/>
            <person name="Kawasawa Y."/>
            <person name="Kelso J."/>
            <person name="Kitamura H."/>
            <person name="Kitano H."/>
            <person name="Kollias G."/>
            <person name="Krishnan S.P."/>
            <person name="Kruger A."/>
            <person name="Kummerfeld S.K."/>
            <person name="Kurochkin I.V."/>
            <person name="Lareau L.F."/>
            <person name="Lazarevic D."/>
            <person name="Lipovich L."/>
            <person name="Liu J."/>
            <person name="Liuni S."/>
            <person name="McWilliam S."/>
            <person name="Madan Babu M."/>
            <person name="Madera M."/>
            <person name="Marchionni L."/>
            <person name="Matsuda H."/>
            <person name="Matsuzawa S."/>
            <person name="Miki H."/>
            <person name="Mignone F."/>
            <person name="Miyake S."/>
            <person name="Morris K."/>
            <person name="Mottagui-Tabar S."/>
            <person name="Mulder N."/>
            <person name="Nakano N."/>
            <person name="Nakauchi H."/>
            <person name="Ng P."/>
            <person name="Nilsson R."/>
            <person name="Nishiguchi S."/>
            <person name="Nishikawa S."/>
            <person name="Nori F."/>
            <person name="Ohara O."/>
            <person name="Okazaki Y."/>
            <person name="Orlando V."/>
            <person name="Pang K.C."/>
            <person name="Pavan W.J."/>
            <person name="Pavesi G."/>
            <person name="Pesole G."/>
            <person name="Petrovsky N."/>
            <person name="Piazza S."/>
            <person name="Reed J."/>
            <person name="Reid J.F."/>
            <person name="Ring B.Z."/>
            <person name="Ringwald M."/>
            <person name="Rost B."/>
            <person name="Ruan Y."/>
            <person name="Salzberg S.L."/>
            <person name="Sandelin A."/>
            <person name="Schneider C."/>
            <person name="Schoenbach C."/>
            <person name="Sekiguchi K."/>
            <person name="Semple C.A."/>
            <person name="Seno S."/>
            <person name="Sessa L."/>
            <person name="Sheng Y."/>
            <person name="Shibata Y."/>
            <person name="Shimada H."/>
            <person name="Shimada K."/>
            <person name="Silva D."/>
            <person name="Sinclair B."/>
            <person name="Sperling S."/>
            <person name="Stupka E."/>
            <person name="Sugiura K."/>
            <person name="Sultana R."/>
            <person name="Takenaka Y."/>
            <person name="Taki K."/>
            <person name="Tammoja K."/>
            <person name="Tan S.L."/>
            <person name="Tang S."/>
            <person name="Taylor M.S."/>
            <person name="Tegner J."/>
            <person name="Teichmann S.A."/>
            <person name="Ueda H.R."/>
            <person name="van Nimwegen E."/>
            <person name="Verardo R."/>
            <person name="Wei C.L."/>
            <person name="Yagi K."/>
            <person name="Yamanishi H."/>
            <person name="Zabarovsky E."/>
            <person name="Zhu S."/>
            <person name="Zimmer A."/>
            <person name="Hide W."/>
            <person name="Bult C."/>
            <person name="Grimmond S.M."/>
            <person name="Teasdale R.D."/>
            <person name="Liu E.T."/>
            <person name="Brusic V."/>
            <person name="Quackenbush J."/>
            <person name="Wahlestedt C."/>
            <person name="Mattick J.S."/>
            <person name="Hume D.A."/>
            <person name="Kai C."/>
            <person name="Sasaki D."/>
            <person name="Tomaru Y."/>
            <person name="Fukuda S."/>
            <person name="Kanamori-Katayama M."/>
            <person name="Suzuki M."/>
            <person name="Aoki J."/>
            <person name="Arakawa T."/>
            <person name="Iida J."/>
            <person name="Imamura K."/>
            <person name="Itoh M."/>
            <person name="Kato T."/>
            <person name="Kawaji H."/>
            <person name="Kawagashira N."/>
            <person name="Kawashima T."/>
            <person name="Kojima M."/>
            <person name="Kondo S."/>
            <person name="Konno H."/>
            <person name="Nakano K."/>
            <person name="Ninomiya N."/>
            <person name="Nishio T."/>
            <person name="Okada M."/>
            <person name="Plessy C."/>
            <person name="Shibata K."/>
            <person name="Shiraki T."/>
            <person name="Suzuki S."/>
            <person name="Tagami M."/>
            <person name="Waki K."/>
            <person name="Watahiki A."/>
            <person name="Okamura-Oho Y."/>
            <person name="Suzuki H."/>
            <person name="Kawai J."/>
            <person name="Hayashizaki Y."/>
        </authorList>
    </citation>
    <scope>NUCLEOTIDE SEQUENCE [LARGE SCALE MRNA] OF 1034-1482 (ISOFORM 1)</scope>
    <source>
        <strain>C57BL/6J</strain>
        <tissue>Testis</tissue>
    </source>
</reference>
<reference key="5">
    <citation type="journal article" date="2003" name="DNA Res.">
        <title>Prediction of the coding sequences of mouse homologues of KIAA gene: III. The complete nucleotide sequences of 500 mouse KIAA-homologous cDNAs identified by screening of terminal sequences of cDNA clones randomly sampled from size-fractionated libraries.</title>
        <authorList>
            <person name="Okazaki N."/>
            <person name="Kikuno R."/>
            <person name="Ohara R."/>
            <person name="Inamoto S."/>
            <person name="Koseki H."/>
            <person name="Hiraoka S."/>
            <person name="Saga Y."/>
            <person name="Nagase T."/>
            <person name="Ohara O."/>
            <person name="Koga H."/>
        </authorList>
    </citation>
    <scope>NUCLEOTIDE SEQUENCE [LARGE SCALE MRNA] OF 1482-2603 (ISOFORM 1)</scope>
    <source>
        <tissue>Embryonic tail</tissue>
    </source>
</reference>
<reference key="6">
    <citation type="journal article" date="2004" name="Genome Res.">
        <title>The status, quality, and expansion of the NIH full-length cDNA project: the Mammalian Gene Collection (MGC).</title>
        <authorList>
            <consortium name="The MGC Project Team"/>
        </authorList>
    </citation>
    <scope>NUCLEOTIDE SEQUENCE [LARGE SCALE MRNA] OF 1902-2603 (ISOFORM 1)</scope>
    <source>
        <strain>FVB/N</strain>
        <tissue>Mammary tumor</tissue>
        <tissue>Salivary gland</tissue>
    </source>
</reference>
<reference key="7">
    <citation type="journal article" date="2002" name="Exp. Cell Res.">
        <title>Hepatic differentiation of murine embryonic stem cells.</title>
        <authorList>
            <person name="Jones E.A."/>
            <person name="Tosh D."/>
            <person name="Wilson D.I."/>
            <person name="Lindsay S."/>
            <person name="Forrester L.M."/>
        </authorList>
    </citation>
    <scope>TISSUE SPECIFICITY</scope>
</reference>
<reference key="8">
    <citation type="journal article" date="2007" name="Proc. Natl. Acad. Sci. U.S.A.">
        <title>Large-scale phosphorylation analysis of mouse liver.</title>
        <authorList>
            <person name="Villen J."/>
            <person name="Beausoleil S.A."/>
            <person name="Gerber S.A."/>
            <person name="Gygi S.P."/>
        </authorList>
    </citation>
    <scope>PHOSPHORYLATION [LARGE SCALE ANALYSIS] AT SER-2043</scope>
    <scope>IDENTIFICATION BY MASS SPECTROMETRY [LARGE SCALE ANALYSIS]</scope>
    <source>
        <tissue>Liver</tissue>
    </source>
</reference>
<reference key="9">
    <citation type="journal article" date="2009" name="FEBS Lett.">
        <title>Ankrd17, an ubiquitously expressed ankyrin factor, is essential for the vascular integrity during embryogenesis.</title>
        <authorList>
            <person name="Hou S.C."/>
            <person name="Chan L.W."/>
            <person name="Chou Y.C."/>
            <person name="Su C.Y."/>
            <person name="Chen X."/>
            <person name="Shih Y.L."/>
            <person name="Tsai P.C."/>
            <person name="Shen C.K."/>
            <person name="Yan Y.T."/>
        </authorList>
    </citation>
    <scope>DISRUPTION PHENOTYPE</scope>
    <scope>FUNCTION</scope>
</reference>
<reference key="10">
    <citation type="journal article" date="2010" name="Cell">
        <title>A tissue-specific atlas of mouse protein phosphorylation and expression.</title>
        <authorList>
            <person name="Huttlin E.L."/>
            <person name="Jedrychowski M.P."/>
            <person name="Elias J.E."/>
            <person name="Goswami T."/>
            <person name="Rad R."/>
            <person name="Beausoleil S.A."/>
            <person name="Villen J."/>
            <person name="Haas W."/>
            <person name="Sowa M.E."/>
            <person name="Gygi S.P."/>
        </authorList>
    </citation>
    <scope>PHOSPHORYLATION [LARGE SCALE ANALYSIS] AT SER-15; SER-42; SER-1692; SER-1696; SER-1705; SER-2040; SER-2041; SER-2043; SER-2055 AND SER-2401</scope>
    <scope>IDENTIFICATION BY MASS SPECTROMETRY [LARGE SCALE ANALYSIS]</scope>
    <source>
        <tissue>Brain</tissue>
        <tissue>Brown adipose tissue</tissue>
        <tissue>Heart</tissue>
        <tissue>Kidney</tissue>
        <tissue>Liver</tissue>
        <tissue>Lung</tissue>
        <tissue>Pancreas</tissue>
        <tissue>Spleen</tissue>
        <tissue>Testis</tissue>
    </source>
</reference>
<reference key="11">
    <citation type="journal article" date="2014" name="Mol. Cell. Proteomics">
        <title>Immunoaffinity enrichment and mass spectrometry analysis of protein methylation.</title>
        <authorList>
            <person name="Guo A."/>
            <person name="Gu H."/>
            <person name="Zhou J."/>
            <person name="Mulhern D."/>
            <person name="Wang Y."/>
            <person name="Lee K.A."/>
            <person name="Yang V."/>
            <person name="Aguiar M."/>
            <person name="Kornhauser J."/>
            <person name="Jia X."/>
            <person name="Ren J."/>
            <person name="Beausoleil S.A."/>
            <person name="Silva J.C."/>
            <person name="Vemulapalli V."/>
            <person name="Bedford M.T."/>
            <person name="Comb M.J."/>
        </authorList>
    </citation>
    <scope>METHYLATION [LARGE SCALE ANALYSIS] AT ARG-1870</scope>
    <scope>IDENTIFICATION BY MASS SPECTROMETRY [LARGE SCALE ANALYSIS]</scope>
    <source>
        <tissue>Embryo</tissue>
    </source>
</reference>
<accession>Q99NH0</accession>
<accession>Q3TV99</accession>
<accession>Q5F4T7</accession>
<accession>Q6PG69</accession>
<accession>Q6ZQ66</accession>
<accession>Q8CHT4</accession>
<evidence type="ECO:0000250" key="1">
    <source>
        <dbReference type="UniProtKB" id="O75179"/>
    </source>
</evidence>
<evidence type="ECO:0000255" key="2"/>
<evidence type="ECO:0000255" key="3">
    <source>
        <dbReference type="PROSITE-ProRule" id="PRU00117"/>
    </source>
</evidence>
<evidence type="ECO:0000256" key="4">
    <source>
        <dbReference type="SAM" id="MobiDB-lite"/>
    </source>
</evidence>
<evidence type="ECO:0000269" key="5">
    <source>
    </source>
</evidence>
<evidence type="ECO:0000269" key="6">
    <source>
    </source>
</evidence>
<evidence type="ECO:0000269" key="7">
    <source>
    </source>
</evidence>
<evidence type="ECO:0000303" key="8">
    <source>
    </source>
</evidence>
<evidence type="ECO:0000303" key="9">
    <source ref="1"/>
</evidence>
<evidence type="ECO:0000305" key="10"/>
<evidence type="ECO:0007744" key="11">
    <source>
    </source>
</evidence>
<evidence type="ECO:0007744" key="12">
    <source>
    </source>
</evidence>
<evidence type="ECO:0007744" key="13">
    <source>
    </source>
</evidence>